<keyword id="KW-0963">Cytoplasm</keyword>
<keyword id="KW-0385">Hypusine</keyword>
<keyword id="KW-0396">Initiation factor</keyword>
<keyword id="KW-0648">Protein biosynthesis</keyword>
<keyword id="KW-1185">Reference proteome</keyword>
<reference key="1">
    <citation type="journal article" date="1997" name="J. Bacteriol.">
        <title>Complete genome sequence of Methanobacterium thermoautotrophicum deltaH: functional analysis and comparative genomics.</title>
        <authorList>
            <person name="Smith D.R."/>
            <person name="Doucette-Stamm L.A."/>
            <person name="Deloughery C."/>
            <person name="Lee H.-M."/>
            <person name="Dubois J."/>
            <person name="Aldredge T."/>
            <person name="Bashirzadeh R."/>
            <person name="Blakely D."/>
            <person name="Cook R."/>
            <person name="Gilbert K."/>
            <person name="Harrison D."/>
            <person name="Hoang L."/>
            <person name="Keagle P."/>
            <person name="Lumm W."/>
            <person name="Pothier B."/>
            <person name="Qiu D."/>
            <person name="Spadafora R."/>
            <person name="Vicare R."/>
            <person name="Wang Y."/>
            <person name="Wierzbowski J."/>
            <person name="Gibson R."/>
            <person name="Jiwani N."/>
            <person name="Caruso A."/>
            <person name="Bush D."/>
            <person name="Safer H."/>
            <person name="Patwell D."/>
            <person name="Prabhakar S."/>
            <person name="McDougall S."/>
            <person name="Shimer G."/>
            <person name="Goyal A."/>
            <person name="Pietrovski S."/>
            <person name="Church G.M."/>
            <person name="Daniels C.J."/>
            <person name="Mao J.-I."/>
            <person name="Rice P."/>
            <person name="Noelling J."/>
            <person name="Reeve J.N."/>
        </authorList>
    </citation>
    <scope>NUCLEOTIDE SEQUENCE [LARGE SCALE GENOMIC DNA]</scope>
    <source>
        <strain>ATCC 29096 / DSM 1053 / JCM 10044 / NBRC 100330 / Delta H</strain>
    </source>
</reference>
<dbReference type="EMBL" id="AE000666">
    <property type="protein sequence ID" value="AAB85367.1"/>
    <property type="molecule type" value="Genomic_DNA"/>
</dbReference>
<dbReference type="PIR" id="A69216">
    <property type="entry name" value="A69216"/>
</dbReference>
<dbReference type="RefSeq" id="WP_010876502.1">
    <property type="nucleotide sequence ID" value="NC_000916.1"/>
</dbReference>
<dbReference type="SMR" id="O26955"/>
<dbReference type="FunCoup" id="O26955">
    <property type="interactions" value="107"/>
</dbReference>
<dbReference type="STRING" id="187420.MTH_869"/>
<dbReference type="PaxDb" id="187420-MTH_869"/>
<dbReference type="EnsemblBacteria" id="AAB85367">
    <property type="protein sequence ID" value="AAB85367"/>
    <property type="gene ID" value="MTH_869"/>
</dbReference>
<dbReference type="GeneID" id="82297319"/>
<dbReference type="KEGG" id="mth:MTH_869"/>
<dbReference type="PATRIC" id="fig|187420.15.peg.853"/>
<dbReference type="HOGENOM" id="CLU_102600_3_0_2"/>
<dbReference type="InParanoid" id="O26955"/>
<dbReference type="Proteomes" id="UP000005223">
    <property type="component" value="Chromosome"/>
</dbReference>
<dbReference type="GO" id="GO:0005737">
    <property type="term" value="C:cytoplasm"/>
    <property type="evidence" value="ECO:0007669"/>
    <property type="project" value="UniProtKB-SubCell"/>
</dbReference>
<dbReference type="GO" id="GO:0043022">
    <property type="term" value="F:ribosome binding"/>
    <property type="evidence" value="ECO:0007669"/>
    <property type="project" value="InterPro"/>
</dbReference>
<dbReference type="GO" id="GO:0003723">
    <property type="term" value="F:RNA binding"/>
    <property type="evidence" value="ECO:0007669"/>
    <property type="project" value="InterPro"/>
</dbReference>
<dbReference type="GO" id="GO:0003746">
    <property type="term" value="F:translation elongation factor activity"/>
    <property type="evidence" value="ECO:0007669"/>
    <property type="project" value="InterPro"/>
</dbReference>
<dbReference type="GO" id="GO:0003743">
    <property type="term" value="F:translation initiation factor activity"/>
    <property type="evidence" value="ECO:0007669"/>
    <property type="project" value="UniProtKB-UniRule"/>
</dbReference>
<dbReference type="GO" id="GO:0045901">
    <property type="term" value="P:positive regulation of translational elongation"/>
    <property type="evidence" value="ECO:0007669"/>
    <property type="project" value="InterPro"/>
</dbReference>
<dbReference type="GO" id="GO:0045905">
    <property type="term" value="P:positive regulation of translational termination"/>
    <property type="evidence" value="ECO:0007669"/>
    <property type="project" value="InterPro"/>
</dbReference>
<dbReference type="CDD" id="cd04467">
    <property type="entry name" value="S1_aIF5A"/>
    <property type="match status" value="1"/>
</dbReference>
<dbReference type="FunFam" id="2.30.30.30:FF:000038">
    <property type="entry name" value="Translation initiation factor 5A"/>
    <property type="match status" value="1"/>
</dbReference>
<dbReference type="Gene3D" id="2.30.30.30">
    <property type="match status" value="1"/>
</dbReference>
<dbReference type="Gene3D" id="2.40.50.140">
    <property type="entry name" value="Nucleic acid-binding proteins"/>
    <property type="match status" value="1"/>
</dbReference>
<dbReference type="HAMAP" id="MF_00085">
    <property type="entry name" value="eIF_5A"/>
    <property type="match status" value="1"/>
</dbReference>
<dbReference type="InterPro" id="IPR001884">
    <property type="entry name" value="IF5A-like"/>
</dbReference>
<dbReference type="InterPro" id="IPR048670">
    <property type="entry name" value="IF5A-like_N"/>
</dbReference>
<dbReference type="InterPro" id="IPR012340">
    <property type="entry name" value="NA-bd_OB-fold"/>
</dbReference>
<dbReference type="InterPro" id="IPR014722">
    <property type="entry name" value="Rib_uL2_dom2"/>
</dbReference>
<dbReference type="InterPro" id="IPR019769">
    <property type="entry name" value="Trans_elong_IF5A_hypusine_site"/>
</dbReference>
<dbReference type="InterPro" id="IPR022847">
    <property type="entry name" value="Transl_elong_IF5A_arc"/>
</dbReference>
<dbReference type="InterPro" id="IPR020189">
    <property type="entry name" value="Transl_elong_IF5A_C"/>
</dbReference>
<dbReference type="InterPro" id="IPR008991">
    <property type="entry name" value="Translation_prot_SH3-like_sf"/>
</dbReference>
<dbReference type="NCBIfam" id="TIGR00037">
    <property type="entry name" value="eIF_5A"/>
    <property type="match status" value="1"/>
</dbReference>
<dbReference type="NCBIfam" id="NF003076">
    <property type="entry name" value="PRK03999.1"/>
    <property type="match status" value="1"/>
</dbReference>
<dbReference type="PANTHER" id="PTHR11673">
    <property type="entry name" value="TRANSLATION INITIATION FACTOR 5A FAMILY MEMBER"/>
    <property type="match status" value="1"/>
</dbReference>
<dbReference type="Pfam" id="PF01287">
    <property type="entry name" value="eIF-5a"/>
    <property type="match status" value="1"/>
</dbReference>
<dbReference type="Pfam" id="PF21485">
    <property type="entry name" value="IF5A-like_N"/>
    <property type="match status" value="1"/>
</dbReference>
<dbReference type="PIRSF" id="PIRSF003025">
    <property type="entry name" value="eIF5A"/>
    <property type="match status" value="1"/>
</dbReference>
<dbReference type="SMART" id="SM01376">
    <property type="entry name" value="eIF-5a"/>
    <property type="match status" value="1"/>
</dbReference>
<dbReference type="SUPFAM" id="SSF50249">
    <property type="entry name" value="Nucleic acid-binding proteins"/>
    <property type="match status" value="1"/>
</dbReference>
<dbReference type="SUPFAM" id="SSF50104">
    <property type="entry name" value="Translation proteins SH3-like domain"/>
    <property type="match status" value="1"/>
</dbReference>
<dbReference type="PROSITE" id="PS00302">
    <property type="entry name" value="IF5A_HYPUSINE"/>
    <property type="match status" value="1"/>
</dbReference>
<proteinExistence type="inferred from homology"/>
<feature type="chain" id="PRO_0000142496" description="Translation initiation factor 5A">
    <location>
        <begin position="1"/>
        <end position="130"/>
    </location>
</feature>
<feature type="modified residue" description="Hypusine" evidence="1">
    <location>
        <position position="36"/>
    </location>
</feature>
<evidence type="ECO:0000250" key="1"/>
<evidence type="ECO:0000305" key="2"/>
<name>IF5A_METTH</name>
<comment type="function">
    <text evidence="1">Functions by promoting the formation of the first peptide bond.</text>
</comment>
<comment type="subcellular location">
    <subcellularLocation>
        <location evidence="1">Cytoplasm</location>
    </subcellularLocation>
</comment>
<comment type="similarity">
    <text evidence="2">Belongs to the eIF-5A family.</text>
</comment>
<gene>
    <name type="primary">eif5a</name>
    <name type="ordered locus">MTH_869</name>
</gene>
<protein>
    <recommendedName>
        <fullName>Translation initiation factor 5A</fullName>
    </recommendedName>
    <alternativeName>
        <fullName>Hypusine-containing protein</fullName>
    </alternativeName>
    <alternativeName>
        <fullName>eIF-5A</fullName>
    </alternativeName>
</protein>
<accession>O26955</accession>
<sequence length="130" mass="14309">MSKKVVEVKTLKVGKYVIIDGEASKITNISTSSPGKHGSAKARVEAVGIFDNQKRSFVKPVDSKVDIPIIDKRTAQVIAIMGGDVQLMDLETYETFETPIPDELSEQLVEGVEVEYIEALGQRKLMRTKG</sequence>
<organism>
    <name type="scientific">Methanothermobacter thermautotrophicus (strain ATCC 29096 / DSM 1053 / JCM 10044 / NBRC 100330 / Delta H)</name>
    <name type="common">Methanobacterium thermoautotrophicum</name>
    <dbReference type="NCBI Taxonomy" id="187420"/>
    <lineage>
        <taxon>Archaea</taxon>
        <taxon>Methanobacteriati</taxon>
        <taxon>Methanobacteriota</taxon>
        <taxon>Methanomada group</taxon>
        <taxon>Methanobacteria</taxon>
        <taxon>Methanobacteriales</taxon>
        <taxon>Methanobacteriaceae</taxon>
        <taxon>Methanothermobacter</taxon>
    </lineage>
</organism>